<gene>
    <name type="primary">SSL-1</name>
</gene>
<evidence type="ECO:0000250" key="1">
    <source>
        <dbReference type="UniProtKB" id="P37268"/>
    </source>
</evidence>
<evidence type="ECO:0000269" key="2">
    <source>
    </source>
</evidence>
<evidence type="ECO:0000305" key="3"/>
<feature type="chain" id="PRO_0000421361" description="Presqualene diphosphate synthase">
    <location>
        <begin position="1"/>
        <end position="403"/>
    </location>
</feature>
<feature type="binding site" evidence="1">
    <location>
        <position position="84"/>
    </location>
    <ligand>
        <name>Mg(2+)</name>
        <dbReference type="ChEBI" id="CHEBI:18420"/>
    </ligand>
</feature>
<feature type="binding site" evidence="1">
    <location>
        <position position="87"/>
    </location>
    <ligand>
        <name>Mg(2+)</name>
        <dbReference type="ChEBI" id="CHEBI:18420"/>
    </ligand>
</feature>
<feature type="binding site" evidence="1">
    <location>
        <position position="88"/>
    </location>
    <ligand>
        <name>Mg(2+)</name>
        <dbReference type="ChEBI" id="CHEBI:18420"/>
    </ligand>
</feature>
<keyword id="KW-0460">Magnesium</keyword>
<keyword id="KW-0479">Metal-binding</keyword>
<keyword id="KW-0808">Transferase</keyword>
<reference key="1">
    <citation type="journal article" date="2011" name="Proc. Natl. Acad. Sci. U.S.A.">
        <title>Identification of unique mechanisms for triterpene biosynthesis in Botryococcus braunii.</title>
        <authorList>
            <person name="Niehaus T.D."/>
            <person name="Okada S."/>
            <person name="Devarenne T.P."/>
            <person name="Watt D.S."/>
            <person name="Sviripa V."/>
            <person name="Chappell J."/>
        </authorList>
    </citation>
    <scope>NUCLEOTIDE SEQUENCE [MRNA]</scope>
    <scope>FUNCTION</scope>
    <scope>CATALYTIC ACTIVITY</scope>
    <scope>BIOPHYSICOCHEMICAL PROPERTIES</scope>
    <source>
        <strain>Race B</strain>
    </source>
</reference>
<sequence>MTMHQDHGVMKDLVKHPNEFPYLLQLAATTYGSPAAPIPKEPDRAFCYNTLHTVSKGFPRFVMRLPQELQDPICIFYLLLRALDTVEDDMNLKSETKISLLRVFHEHCSDRNWSMKSDYGIYADLMERFPLVVSVLEKLPPATQQTFRENVKYMGNGMADFIDKQILTVDEYDLYCHYVAGSCGIAVTKVIVQFNLATPEADSYDFSNSLGLLLQKANIITDYNEDINEEPRPRMFWPQEIWGKYAEKLADFNEPENIDTAVKCLNHMVTDAMRHIEPSLKGMVYFTDKTVFRALALLLVTAFGHLSTLYNNPNVFKEKVRQRKGRIARLVMSSRNVPGLFRTCLKLANNFESRCKQETANDPTVAMTIKRLQSIQATCRDGLAKYDTPSGLKSFCAAPTPTK</sequence>
<organism>
    <name type="scientific">Botryococcus braunii</name>
    <name type="common">Green alga</name>
    <dbReference type="NCBI Taxonomy" id="38881"/>
    <lineage>
        <taxon>Eukaryota</taxon>
        <taxon>Viridiplantae</taxon>
        <taxon>Chlorophyta</taxon>
        <taxon>core chlorophytes</taxon>
        <taxon>Trebouxiophyceae</taxon>
        <taxon>Trebouxiophyceae incertae sedis</taxon>
        <taxon>Elliptochloris clade</taxon>
        <taxon>Botryococcus</taxon>
    </lineage>
</organism>
<protein>
    <recommendedName>
        <fullName evidence="3">Presqualene diphosphate synthase</fullName>
        <ecNumber evidence="2">2.5.1.103</ecNumber>
    </recommendedName>
    <alternativeName>
        <fullName>Squalene synthase-like 1</fullName>
    </alternativeName>
</protein>
<name>PSDS_BOTBR</name>
<dbReference type="EC" id="2.5.1.103" evidence="2"/>
<dbReference type="EMBL" id="HQ585058">
    <property type="protein sequence ID" value="AEL16715.1"/>
    <property type="molecule type" value="mRNA"/>
</dbReference>
<dbReference type="SMR" id="G0Y286"/>
<dbReference type="KEGG" id="ag:AEL16715"/>
<dbReference type="BioCyc" id="MetaCyc:MONOMER-17313"/>
<dbReference type="BRENDA" id="2.5.1.103">
    <property type="organism ID" value="915"/>
</dbReference>
<dbReference type="GO" id="GO:0005789">
    <property type="term" value="C:endoplasmic reticulum membrane"/>
    <property type="evidence" value="ECO:0007669"/>
    <property type="project" value="TreeGrafter"/>
</dbReference>
<dbReference type="GO" id="GO:0046872">
    <property type="term" value="F:metal ion binding"/>
    <property type="evidence" value="ECO:0007669"/>
    <property type="project" value="UniProtKB-KW"/>
</dbReference>
<dbReference type="GO" id="GO:0051996">
    <property type="term" value="F:squalene synthase [NAD(P)H] activity"/>
    <property type="evidence" value="ECO:0007669"/>
    <property type="project" value="InterPro"/>
</dbReference>
<dbReference type="GO" id="GO:0045338">
    <property type="term" value="P:farnesyl diphosphate metabolic process"/>
    <property type="evidence" value="ECO:0007669"/>
    <property type="project" value="InterPro"/>
</dbReference>
<dbReference type="GO" id="GO:0008610">
    <property type="term" value="P:lipid biosynthetic process"/>
    <property type="evidence" value="ECO:0007669"/>
    <property type="project" value="InterPro"/>
</dbReference>
<dbReference type="CDD" id="cd00683">
    <property type="entry name" value="Trans_IPPS_HH"/>
    <property type="match status" value="1"/>
</dbReference>
<dbReference type="FunFam" id="1.10.600.10:FF:000023">
    <property type="entry name" value="Squalene synthase"/>
    <property type="match status" value="1"/>
</dbReference>
<dbReference type="Gene3D" id="1.10.600.10">
    <property type="entry name" value="Farnesyl Diphosphate Synthase"/>
    <property type="match status" value="1"/>
</dbReference>
<dbReference type="InterPro" id="IPR008949">
    <property type="entry name" value="Isoprenoid_synthase_dom_sf"/>
</dbReference>
<dbReference type="InterPro" id="IPR002060">
    <property type="entry name" value="Squ/phyt_synthse"/>
</dbReference>
<dbReference type="InterPro" id="IPR006449">
    <property type="entry name" value="Squal_synth-like"/>
</dbReference>
<dbReference type="InterPro" id="IPR044844">
    <property type="entry name" value="Trans_IPPS_euk-type"/>
</dbReference>
<dbReference type="InterPro" id="IPR033904">
    <property type="entry name" value="Trans_IPPS_HH"/>
</dbReference>
<dbReference type="NCBIfam" id="TIGR01559">
    <property type="entry name" value="squal_synth"/>
    <property type="match status" value="1"/>
</dbReference>
<dbReference type="PANTHER" id="PTHR11626">
    <property type="entry name" value="FARNESYL-DIPHOSPHATE FARNESYLTRANSFERASE"/>
    <property type="match status" value="1"/>
</dbReference>
<dbReference type="PANTHER" id="PTHR11626:SF2">
    <property type="entry name" value="SQUALENE SYNTHASE"/>
    <property type="match status" value="1"/>
</dbReference>
<dbReference type="Pfam" id="PF00494">
    <property type="entry name" value="SQS_PSY"/>
    <property type="match status" value="1"/>
</dbReference>
<dbReference type="SFLD" id="SFLDS00005">
    <property type="entry name" value="Isoprenoid_Synthase_Type_I"/>
    <property type="match status" value="1"/>
</dbReference>
<dbReference type="SFLD" id="SFLDG01018">
    <property type="entry name" value="Squalene/Phytoene_Synthase_Lik"/>
    <property type="match status" value="1"/>
</dbReference>
<dbReference type="SUPFAM" id="SSF48576">
    <property type="entry name" value="Terpenoid synthases"/>
    <property type="match status" value="1"/>
</dbReference>
<comment type="function">
    <text evidence="2">Catalyzes the biosynthesis of presqualene diphosphate (PSPP). Works in combination with SSL-2 or SSL-3 to produce respectively squalene or botryococcene. In most other species, farnesyl diphosphate (FPP) is converted into squalene in a two-step reaction by a single enzyme.</text>
</comment>
<comment type="catalytic activity">
    <reaction evidence="2">
        <text>2 (2E,6E)-farnesyl diphosphate = presqualene diphosphate + diphosphate</text>
        <dbReference type="Rhea" id="RHEA:22672"/>
        <dbReference type="ChEBI" id="CHEBI:33019"/>
        <dbReference type="ChEBI" id="CHEBI:57310"/>
        <dbReference type="ChEBI" id="CHEBI:175763"/>
        <dbReference type="EC" id="2.5.1.103"/>
    </reaction>
</comment>
<comment type="cofactor">
    <cofactor evidence="1">
        <name>Mg(2+)</name>
        <dbReference type="ChEBI" id="CHEBI:18420"/>
    </cofactor>
</comment>
<comment type="biophysicochemical properties">
    <kinetics>
        <KM evidence="2">12.8 uM for (2E,6E)-farnesyl diphosphate</KM>
        <text>kcat is 0.27 sec(-1) with farnesyl diphosphate as substrate. Not stimulated by NADPH addition.</text>
    </kinetics>
</comment>
<comment type="similarity">
    <text evidence="3">Belongs to the phytoene/squalene synthase family.</text>
</comment>
<proteinExistence type="evidence at protein level"/>
<accession>G0Y286</accession>